<dbReference type="EMBL" id="CP000463">
    <property type="protein sequence ID" value="ABJ04288.1"/>
    <property type="molecule type" value="Genomic_DNA"/>
</dbReference>
<dbReference type="SMR" id="Q07UU6"/>
<dbReference type="STRING" id="316055.RPE_0329"/>
<dbReference type="KEGG" id="rpe:RPE_0329"/>
<dbReference type="eggNOG" id="COG0806">
    <property type="taxonomic scope" value="Bacteria"/>
</dbReference>
<dbReference type="HOGENOM" id="CLU_077636_0_1_5"/>
<dbReference type="OrthoDB" id="9788191at2"/>
<dbReference type="GO" id="GO:0005737">
    <property type="term" value="C:cytoplasm"/>
    <property type="evidence" value="ECO:0007669"/>
    <property type="project" value="UniProtKB-SubCell"/>
</dbReference>
<dbReference type="GO" id="GO:0005840">
    <property type="term" value="C:ribosome"/>
    <property type="evidence" value="ECO:0007669"/>
    <property type="project" value="InterPro"/>
</dbReference>
<dbReference type="GO" id="GO:0043022">
    <property type="term" value="F:ribosome binding"/>
    <property type="evidence" value="ECO:0007669"/>
    <property type="project" value="InterPro"/>
</dbReference>
<dbReference type="GO" id="GO:0042274">
    <property type="term" value="P:ribosomal small subunit biogenesis"/>
    <property type="evidence" value="ECO:0007669"/>
    <property type="project" value="UniProtKB-UniRule"/>
</dbReference>
<dbReference type="GO" id="GO:0006364">
    <property type="term" value="P:rRNA processing"/>
    <property type="evidence" value="ECO:0007669"/>
    <property type="project" value="UniProtKB-UniRule"/>
</dbReference>
<dbReference type="Gene3D" id="2.30.30.240">
    <property type="entry name" value="PRC-barrel domain"/>
    <property type="match status" value="1"/>
</dbReference>
<dbReference type="Gene3D" id="2.40.30.60">
    <property type="entry name" value="RimM"/>
    <property type="match status" value="1"/>
</dbReference>
<dbReference type="HAMAP" id="MF_00014">
    <property type="entry name" value="Ribosome_mat_RimM"/>
    <property type="match status" value="1"/>
</dbReference>
<dbReference type="InterPro" id="IPR011033">
    <property type="entry name" value="PRC_barrel-like_sf"/>
</dbReference>
<dbReference type="InterPro" id="IPR056792">
    <property type="entry name" value="PRC_RimM"/>
</dbReference>
<dbReference type="InterPro" id="IPR011961">
    <property type="entry name" value="RimM"/>
</dbReference>
<dbReference type="InterPro" id="IPR002676">
    <property type="entry name" value="RimM_N"/>
</dbReference>
<dbReference type="InterPro" id="IPR036976">
    <property type="entry name" value="RimM_N_sf"/>
</dbReference>
<dbReference type="InterPro" id="IPR009000">
    <property type="entry name" value="Transl_B-barrel_sf"/>
</dbReference>
<dbReference type="NCBIfam" id="TIGR02273">
    <property type="entry name" value="16S_RimM"/>
    <property type="match status" value="1"/>
</dbReference>
<dbReference type="PANTHER" id="PTHR33692">
    <property type="entry name" value="RIBOSOME MATURATION FACTOR RIMM"/>
    <property type="match status" value="1"/>
</dbReference>
<dbReference type="PANTHER" id="PTHR33692:SF1">
    <property type="entry name" value="RIBOSOME MATURATION FACTOR RIMM"/>
    <property type="match status" value="1"/>
</dbReference>
<dbReference type="Pfam" id="PF24986">
    <property type="entry name" value="PRC_RimM"/>
    <property type="match status" value="1"/>
</dbReference>
<dbReference type="Pfam" id="PF01782">
    <property type="entry name" value="RimM"/>
    <property type="match status" value="1"/>
</dbReference>
<dbReference type="SUPFAM" id="SSF50346">
    <property type="entry name" value="PRC-barrel domain"/>
    <property type="match status" value="1"/>
</dbReference>
<dbReference type="SUPFAM" id="SSF50447">
    <property type="entry name" value="Translation proteins"/>
    <property type="match status" value="1"/>
</dbReference>
<sequence length="176" mass="18755">MATKRICVARIGAPHGVRGALKLWPFTEDPLAVLDYGPLTTQDGSRRFEVETAREAKDHLVATLKGVASRDDAVRLNGIELYIDRDQLPETDEGEYYHADLIGLAAVTAAGEPLGKVAAIHNFGAGDIIEIAPPSGPTLLLPFTNAVVPTVDLEGGRVVIEMPGEIEGDTPNHPEA</sequence>
<name>RIMM_RHOP5</name>
<protein>
    <recommendedName>
        <fullName evidence="1">Ribosome maturation factor RimM</fullName>
    </recommendedName>
</protein>
<reference key="1">
    <citation type="submission" date="2006-09" db="EMBL/GenBank/DDBJ databases">
        <title>Complete sequence of Rhodopseudomonas palustris BisA53.</title>
        <authorList>
            <consortium name="US DOE Joint Genome Institute"/>
            <person name="Copeland A."/>
            <person name="Lucas S."/>
            <person name="Lapidus A."/>
            <person name="Barry K."/>
            <person name="Detter J.C."/>
            <person name="Glavina del Rio T."/>
            <person name="Hammon N."/>
            <person name="Israni S."/>
            <person name="Dalin E."/>
            <person name="Tice H."/>
            <person name="Pitluck S."/>
            <person name="Chain P."/>
            <person name="Malfatti S."/>
            <person name="Shin M."/>
            <person name="Vergez L."/>
            <person name="Schmutz J."/>
            <person name="Larimer F."/>
            <person name="Land M."/>
            <person name="Hauser L."/>
            <person name="Pelletier D.A."/>
            <person name="Kyrpides N."/>
            <person name="Kim E."/>
            <person name="Harwood C.S."/>
            <person name="Oda Y."/>
            <person name="Richardson P."/>
        </authorList>
    </citation>
    <scope>NUCLEOTIDE SEQUENCE [LARGE SCALE GENOMIC DNA]</scope>
    <source>
        <strain>BisA53</strain>
    </source>
</reference>
<organism>
    <name type="scientific">Rhodopseudomonas palustris (strain BisA53)</name>
    <dbReference type="NCBI Taxonomy" id="316055"/>
    <lineage>
        <taxon>Bacteria</taxon>
        <taxon>Pseudomonadati</taxon>
        <taxon>Pseudomonadota</taxon>
        <taxon>Alphaproteobacteria</taxon>
        <taxon>Hyphomicrobiales</taxon>
        <taxon>Nitrobacteraceae</taxon>
        <taxon>Rhodopseudomonas</taxon>
    </lineage>
</organism>
<keyword id="KW-0143">Chaperone</keyword>
<keyword id="KW-0963">Cytoplasm</keyword>
<keyword id="KW-0690">Ribosome biogenesis</keyword>
<keyword id="KW-0698">rRNA processing</keyword>
<gene>
    <name evidence="1" type="primary">rimM</name>
    <name type="ordered locus">RPE_0329</name>
</gene>
<feature type="chain" id="PRO_1000001222" description="Ribosome maturation factor RimM">
    <location>
        <begin position="1"/>
        <end position="176"/>
    </location>
</feature>
<feature type="domain" description="PRC barrel" evidence="1">
    <location>
        <begin position="93"/>
        <end position="166"/>
    </location>
</feature>
<evidence type="ECO:0000255" key="1">
    <source>
        <dbReference type="HAMAP-Rule" id="MF_00014"/>
    </source>
</evidence>
<comment type="function">
    <text evidence="1">An accessory protein needed during the final step in the assembly of 30S ribosomal subunit, possibly for assembly of the head region. Essential for efficient processing of 16S rRNA. May be needed both before and after RbfA during the maturation of 16S rRNA. It has affinity for free ribosomal 30S subunits but not for 70S ribosomes.</text>
</comment>
<comment type="subunit">
    <text evidence="1">Binds ribosomal protein uS19.</text>
</comment>
<comment type="subcellular location">
    <subcellularLocation>
        <location evidence="1">Cytoplasm</location>
    </subcellularLocation>
</comment>
<comment type="domain">
    <text evidence="1">The PRC barrel domain binds ribosomal protein uS19.</text>
</comment>
<comment type="similarity">
    <text evidence="1">Belongs to the RimM family.</text>
</comment>
<proteinExistence type="inferred from homology"/>
<accession>Q07UU6</accession>